<keyword id="KW-0067">ATP-binding</keyword>
<keyword id="KW-0175">Coiled coil</keyword>
<keyword id="KW-0347">Helicase</keyword>
<keyword id="KW-0378">Hydrolase</keyword>
<keyword id="KW-0547">Nucleotide-binding</keyword>
<keyword id="KW-0539">Nucleus</keyword>
<keyword id="KW-1185">Reference proteome</keyword>
<keyword id="KW-0694">RNA-binding</keyword>
<feature type="chain" id="PRO_0000282474" description="DEAD-box ATP-dependent RNA helicase 7">
    <location>
        <begin position="1"/>
        <end position="696"/>
    </location>
</feature>
<feature type="domain" description="Helicase ATP-binding" evidence="3">
    <location>
        <begin position="146"/>
        <end position="328"/>
    </location>
</feature>
<feature type="domain" description="Helicase C-terminal" evidence="4">
    <location>
        <begin position="357"/>
        <end position="500"/>
    </location>
</feature>
<feature type="region of interest" description="Disordered" evidence="5">
    <location>
        <begin position="1"/>
        <end position="116"/>
    </location>
</feature>
<feature type="region of interest" description="Disordered" evidence="5">
    <location>
        <begin position="641"/>
        <end position="696"/>
    </location>
</feature>
<feature type="coiled-coil region" evidence="2">
    <location>
        <begin position="16"/>
        <end position="97"/>
    </location>
</feature>
<feature type="short sequence motif" description="Q motif">
    <location>
        <begin position="115"/>
        <end position="143"/>
    </location>
</feature>
<feature type="short sequence motif" description="DEAD box">
    <location>
        <begin position="274"/>
        <end position="277"/>
    </location>
</feature>
<feature type="compositionally biased region" description="Basic and acidic residues" evidence="5">
    <location>
        <begin position="27"/>
        <end position="38"/>
    </location>
</feature>
<feature type="compositionally biased region" description="Basic residues" evidence="5">
    <location>
        <begin position="39"/>
        <end position="49"/>
    </location>
</feature>
<feature type="compositionally biased region" description="Low complexity" evidence="5">
    <location>
        <begin position="67"/>
        <end position="77"/>
    </location>
</feature>
<feature type="compositionally biased region" description="Acidic residues" evidence="5">
    <location>
        <begin position="92"/>
        <end position="112"/>
    </location>
</feature>
<feature type="compositionally biased region" description="Gly residues" evidence="5">
    <location>
        <begin position="652"/>
        <end position="690"/>
    </location>
</feature>
<feature type="binding site" evidence="3">
    <location>
        <begin position="159"/>
        <end position="166"/>
    </location>
    <ligand>
        <name>ATP</name>
        <dbReference type="ChEBI" id="CHEBI:30616"/>
    </ligand>
</feature>
<feature type="sequence conflict" description="In Ref. 4; AK101403." evidence="6" ref="4">
    <original>I</original>
    <variation>S</variation>
    <location>
        <position position="246"/>
    </location>
</feature>
<evidence type="ECO:0000250" key="1"/>
<evidence type="ECO:0000255" key="2"/>
<evidence type="ECO:0000255" key="3">
    <source>
        <dbReference type="PROSITE-ProRule" id="PRU00541"/>
    </source>
</evidence>
<evidence type="ECO:0000255" key="4">
    <source>
        <dbReference type="PROSITE-ProRule" id="PRU00542"/>
    </source>
</evidence>
<evidence type="ECO:0000256" key="5">
    <source>
        <dbReference type="SAM" id="MobiDB-lite"/>
    </source>
</evidence>
<evidence type="ECO:0000305" key="6"/>
<sequence>MPSLPVAAAEPMAVDESASKKSKRKLKAAEVEVEASSRKKEKKEKKRKAKEPSPSSSSSSEEEERSSTSSDEPAPAAKKAKKEKTKEKVVVEEEEEDDDEGELTASGDEDPADPNALANFRISESLREKLKSKGIKALFPIQATTFDLVLDGHDLVGRARTGQGKTLAFVLPILESLVNGTHKASRRTDYGRPPTVLVLLPTRELAKQVHTDFAFYGATFGLSACCVYGGSDYRSQEMAIRKGVDIVVGTPGRVKDFVEKGTLNFRSLKFRVLDEADEMLNMGFVDDVELILGKVEDVTKVQTLLFSATIPEWVKKLSLRFLKSGKKTVDLVGDEKLKASASVRHLALPCNRAARAQVIPDIIRCYSRGGRTIIFTETKESASDLSGLIAGSRALHGDVAQAQREVILAGFRSGKFLVLVATNVAARGLDINDVQLIIQCEPPRDVEAYIHRSGRTGRAGNTGVAVMLFEPRYKFNVNRIERESGVKFEHISAPQPTDVAQSAGTEAAEAISSVSDSVIPVFREQAEQLLNSSGMSAVDLLAKALAKAVGYTDIKKRSLLSSMDNHTTLLLQTGRSVYAAGFVLSTLKRFMPEERLADVKGITITADGTGAVFDVPSAEVEDYIQGAQNAAMVTVEEVKQLPPLQEREQSGGSRGGGRFGNRRFSGGGGGRGGGGRGFGGGRGRGGGGGNRFNKRY</sequence>
<reference key="1">
    <citation type="journal article" date="2005" name="Nature">
        <title>The map-based sequence of the rice genome.</title>
        <authorList>
            <consortium name="International rice genome sequencing project (IRGSP)"/>
        </authorList>
    </citation>
    <scope>NUCLEOTIDE SEQUENCE [LARGE SCALE GENOMIC DNA]</scope>
    <source>
        <strain>cv. Nipponbare</strain>
    </source>
</reference>
<reference key="2">
    <citation type="journal article" date="2008" name="Nucleic Acids Res.">
        <title>The rice annotation project database (RAP-DB): 2008 update.</title>
        <authorList>
            <consortium name="The rice annotation project (RAP)"/>
        </authorList>
    </citation>
    <scope>GENOME REANNOTATION</scope>
    <source>
        <strain>cv. Nipponbare</strain>
    </source>
</reference>
<reference key="3">
    <citation type="journal article" date="2013" name="Rice">
        <title>Improvement of the Oryza sativa Nipponbare reference genome using next generation sequence and optical map data.</title>
        <authorList>
            <person name="Kawahara Y."/>
            <person name="de la Bastide M."/>
            <person name="Hamilton J.P."/>
            <person name="Kanamori H."/>
            <person name="McCombie W.R."/>
            <person name="Ouyang S."/>
            <person name="Schwartz D.C."/>
            <person name="Tanaka T."/>
            <person name="Wu J."/>
            <person name="Zhou S."/>
            <person name="Childs K.L."/>
            <person name="Davidson R.M."/>
            <person name="Lin H."/>
            <person name="Quesada-Ocampo L."/>
            <person name="Vaillancourt B."/>
            <person name="Sakai H."/>
            <person name="Lee S.S."/>
            <person name="Kim J."/>
            <person name="Numa H."/>
            <person name="Itoh T."/>
            <person name="Buell C.R."/>
            <person name="Matsumoto T."/>
        </authorList>
    </citation>
    <scope>GENOME REANNOTATION</scope>
    <source>
        <strain>cv. Nipponbare</strain>
    </source>
</reference>
<reference key="4">
    <citation type="journal article" date="2003" name="Science">
        <title>Collection, mapping, and annotation of over 28,000 cDNA clones from japonica rice.</title>
        <authorList>
            <consortium name="The rice full-length cDNA consortium"/>
        </authorList>
    </citation>
    <scope>NUCLEOTIDE SEQUENCE [LARGE SCALE MRNA]</scope>
    <source>
        <strain>cv. Nipponbare</strain>
    </source>
</reference>
<proteinExistence type="evidence at transcript level"/>
<accession>Q650T9</accession>
<accession>A0A0N7KR47</accession>
<comment type="catalytic activity">
    <reaction>
        <text>ATP + H2O = ADP + phosphate + H(+)</text>
        <dbReference type="Rhea" id="RHEA:13065"/>
        <dbReference type="ChEBI" id="CHEBI:15377"/>
        <dbReference type="ChEBI" id="CHEBI:15378"/>
        <dbReference type="ChEBI" id="CHEBI:30616"/>
        <dbReference type="ChEBI" id="CHEBI:43474"/>
        <dbReference type="ChEBI" id="CHEBI:456216"/>
        <dbReference type="EC" id="3.6.4.13"/>
    </reaction>
</comment>
<comment type="subcellular location">
    <subcellularLocation>
        <location evidence="1">Nucleus</location>
    </subcellularLocation>
</comment>
<comment type="domain">
    <text>The Q motif is unique to and characteristic of the DEAD box family of RNA helicases and controls ATP binding and hydrolysis.</text>
</comment>
<comment type="similarity">
    <text evidence="6">Belongs to the DEAD box helicase family. DDX21/DDX50 subfamily.</text>
</comment>
<name>RH7_ORYSJ</name>
<organism>
    <name type="scientific">Oryza sativa subsp. japonica</name>
    <name type="common">Rice</name>
    <dbReference type="NCBI Taxonomy" id="39947"/>
    <lineage>
        <taxon>Eukaryota</taxon>
        <taxon>Viridiplantae</taxon>
        <taxon>Streptophyta</taxon>
        <taxon>Embryophyta</taxon>
        <taxon>Tracheophyta</taxon>
        <taxon>Spermatophyta</taxon>
        <taxon>Magnoliopsida</taxon>
        <taxon>Liliopsida</taxon>
        <taxon>Poales</taxon>
        <taxon>Poaceae</taxon>
        <taxon>BOP clade</taxon>
        <taxon>Oryzoideae</taxon>
        <taxon>Oryzeae</taxon>
        <taxon>Oryzinae</taxon>
        <taxon>Oryza</taxon>
        <taxon>Oryza sativa</taxon>
    </lineage>
</organism>
<protein>
    <recommendedName>
        <fullName>DEAD-box ATP-dependent RNA helicase 7</fullName>
        <ecNumber>3.6.4.13</ecNumber>
    </recommendedName>
</protein>
<dbReference type="EC" id="3.6.4.13"/>
<dbReference type="EMBL" id="AP006175">
    <property type="protein sequence ID" value="BAD46678.1"/>
    <property type="molecule type" value="Genomic_DNA"/>
</dbReference>
<dbReference type="EMBL" id="AP008215">
    <property type="protein sequence ID" value="BAF25616.1"/>
    <property type="molecule type" value="Genomic_DNA"/>
</dbReference>
<dbReference type="EMBL" id="AP014965">
    <property type="protein sequence ID" value="BAT09010.1"/>
    <property type="molecule type" value="Genomic_DNA"/>
</dbReference>
<dbReference type="EMBL" id="AK101403">
    <property type="status" value="NOT_ANNOTATED_CDS"/>
    <property type="molecule type" value="mRNA"/>
</dbReference>
<dbReference type="RefSeq" id="XP_015612293.1">
    <property type="nucleotide sequence ID" value="XM_015756807.1"/>
</dbReference>
<dbReference type="SMR" id="Q650T9"/>
<dbReference type="FunCoup" id="Q650T9">
    <property type="interactions" value="1258"/>
</dbReference>
<dbReference type="STRING" id="39947.Q650T9"/>
<dbReference type="PaxDb" id="39947-Q650T9"/>
<dbReference type="EnsemblPlants" id="Os09t0520700-01">
    <property type="protein sequence ID" value="Os09t0520700-01"/>
    <property type="gene ID" value="Os09g0520700"/>
</dbReference>
<dbReference type="Gramene" id="Os09t0520700-01">
    <property type="protein sequence ID" value="Os09t0520700-01"/>
    <property type="gene ID" value="Os09g0520700"/>
</dbReference>
<dbReference type="KEGG" id="dosa:Os09g0520700"/>
<dbReference type="eggNOG" id="KOG0331">
    <property type="taxonomic scope" value="Eukaryota"/>
</dbReference>
<dbReference type="HOGENOM" id="CLU_003041_20_0_1"/>
<dbReference type="InParanoid" id="Q650T9"/>
<dbReference type="OMA" id="YSGFHGR"/>
<dbReference type="OrthoDB" id="4255at2759"/>
<dbReference type="Proteomes" id="UP000000763">
    <property type="component" value="Chromosome 9"/>
</dbReference>
<dbReference type="Proteomes" id="UP000059680">
    <property type="component" value="Chromosome 9"/>
</dbReference>
<dbReference type="ExpressionAtlas" id="Q650T9">
    <property type="expression patterns" value="baseline and differential"/>
</dbReference>
<dbReference type="GO" id="GO:0005730">
    <property type="term" value="C:nucleolus"/>
    <property type="evidence" value="ECO:0000318"/>
    <property type="project" value="GO_Central"/>
</dbReference>
<dbReference type="GO" id="GO:0005524">
    <property type="term" value="F:ATP binding"/>
    <property type="evidence" value="ECO:0007669"/>
    <property type="project" value="UniProtKB-KW"/>
</dbReference>
<dbReference type="GO" id="GO:0016887">
    <property type="term" value="F:ATP hydrolysis activity"/>
    <property type="evidence" value="ECO:0007669"/>
    <property type="project" value="RHEA"/>
</dbReference>
<dbReference type="GO" id="GO:0003729">
    <property type="term" value="F:mRNA binding"/>
    <property type="evidence" value="ECO:0000318"/>
    <property type="project" value="GO_Central"/>
</dbReference>
<dbReference type="GO" id="GO:0003724">
    <property type="term" value="F:RNA helicase activity"/>
    <property type="evidence" value="ECO:0000318"/>
    <property type="project" value="GO_Central"/>
</dbReference>
<dbReference type="GO" id="GO:0016070">
    <property type="term" value="P:RNA metabolic process"/>
    <property type="evidence" value="ECO:0007669"/>
    <property type="project" value="EnsemblPlants"/>
</dbReference>
<dbReference type="CDD" id="cd00268">
    <property type="entry name" value="DEADc"/>
    <property type="match status" value="1"/>
</dbReference>
<dbReference type="CDD" id="cd12937">
    <property type="entry name" value="GUCT_RH7_like"/>
    <property type="match status" value="1"/>
</dbReference>
<dbReference type="CDD" id="cd18787">
    <property type="entry name" value="SF2_C_DEAD"/>
    <property type="match status" value="1"/>
</dbReference>
<dbReference type="FunFam" id="3.30.70.2280:FF:000003">
    <property type="entry name" value="DEAD-box ATP-dependent RNA helicase 7"/>
    <property type="match status" value="1"/>
</dbReference>
<dbReference type="Gene3D" id="3.30.70.2280">
    <property type="match status" value="1"/>
</dbReference>
<dbReference type="Gene3D" id="3.40.50.300">
    <property type="entry name" value="P-loop containing nucleotide triphosphate hydrolases"/>
    <property type="match status" value="2"/>
</dbReference>
<dbReference type="InterPro" id="IPR011545">
    <property type="entry name" value="DEAD/DEAH_box_helicase_dom"/>
</dbReference>
<dbReference type="InterPro" id="IPR050547">
    <property type="entry name" value="DEAD_box_RNA_helicases"/>
</dbReference>
<dbReference type="InterPro" id="IPR012562">
    <property type="entry name" value="GUCT"/>
</dbReference>
<dbReference type="InterPro" id="IPR014001">
    <property type="entry name" value="Helicase_ATP-bd"/>
</dbReference>
<dbReference type="InterPro" id="IPR001650">
    <property type="entry name" value="Helicase_C-like"/>
</dbReference>
<dbReference type="InterPro" id="IPR027417">
    <property type="entry name" value="P-loop_NTPase"/>
</dbReference>
<dbReference type="InterPro" id="IPR035979">
    <property type="entry name" value="RBD_domain_sf"/>
</dbReference>
<dbReference type="InterPro" id="IPR000629">
    <property type="entry name" value="RNA-helicase_DEAD-box_CS"/>
</dbReference>
<dbReference type="PANTHER" id="PTHR47963:SF8">
    <property type="entry name" value="ATP-DEPENDENT RNA HELICASE DEAD"/>
    <property type="match status" value="1"/>
</dbReference>
<dbReference type="PANTHER" id="PTHR47963">
    <property type="entry name" value="DEAD-BOX ATP-DEPENDENT RNA HELICASE 47, MITOCHONDRIAL"/>
    <property type="match status" value="1"/>
</dbReference>
<dbReference type="Pfam" id="PF00270">
    <property type="entry name" value="DEAD"/>
    <property type="match status" value="1"/>
</dbReference>
<dbReference type="Pfam" id="PF08152">
    <property type="entry name" value="GUCT"/>
    <property type="match status" value="1"/>
</dbReference>
<dbReference type="Pfam" id="PF00271">
    <property type="entry name" value="Helicase_C"/>
    <property type="match status" value="1"/>
</dbReference>
<dbReference type="SMART" id="SM00487">
    <property type="entry name" value="DEXDc"/>
    <property type="match status" value="1"/>
</dbReference>
<dbReference type="SMART" id="SM00490">
    <property type="entry name" value="HELICc"/>
    <property type="match status" value="1"/>
</dbReference>
<dbReference type="SUPFAM" id="SSF52540">
    <property type="entry name" value="P-loop containing nucleoside triphosphate hydrolases"/>
    <property type="match status" value="1"/>
</dbReference>
<dbReference type="SUPFAM" id="SSF54928">
    <property type="entry name" value="RNA-binding domain, RBD"/>
    <property type="match status" value="1"/>
</dbReference>
<dbReference type="PROSITE" id="PS00039">
    <property type="entry name" value="DEAD_ATP_HELICASE"/>
    <property type="match status" value="1"/>
</dbReference>
<dbReference type="PROSITE" id="PS51192">
    <property type="entry name" value="HELICASE_ATP_BIND_1"/>
    <property type="match status" value="1"/>
</dbReference>
<dbReference type="PROSITE" id="PS51194">
    <property type="entry name" value="HELICASE_CTER"/>
    <property type="match status" value="1"/>
</dbReference>
<dbReference type="PROSITE" id="PS51195">
    <property type="entry name" value="Q_MOTIF"/>
    <property type="match status" value="1"/>
</dbReference>
<gene>
    <name type="ordered locus">Os09g0520700</name>
    <name type="ordered locus">LOC_Os09g34910</name>
    <name type="ORF">P0669G04.13</name>
</gene>